<organism>
    <name type="scientific">Caenorhabditis elegans</name>
    <dbReference type="NCBI Taxonomy" id="6239"/>
    <lineage>
        <taxon>Eukaryota</taxon>
        <taxon>Metazoa</taxon>
        <taxon>Ecdysozoa</taxon>
        <taxon>Nematoda</taxon>
        <taxon>Chromadorea</taxon>
        <taxon>Rhabditida</taxon>
        <taxon>Rhabditina</taxon>
        <taxon>Rhabditomorpha</taxon>
        <taxon>Rhabditoidea</taxon>
        <taxon>Rhabditidae</taxon>
        <taxon>Peloderinae</taxon>
        <taxon>Caenorhabditis</taxon>
    </lineage>
</organism>
<feature type="chain" id="PRO_0000190210" description="Rab-3-interacting molecule unc-10">
    <location>
        <begin position="1"/>
        <end position="1563"/>
    </location>
</feature>
<feature type="domain" description="RabBD" evidence="5">
    <location>
        <begin position="7"/>
        <end position="133"/>
    </location>
</feature>
<feature type="domain" description="PDZ" evidence="4">
    <location>
        <begin position="643"/>
        <end position="733"/>
    </location>
</feature>
<feature type="domain" description="C2 1" evidence="2">
    <location>
        <begin position="840"/>
        <end position="962"/>
    </location>
</feature>
<feature type="domain" description="C2 2" evidence="2">
    <location>
        <begin position="1417"/>
        <end position="1536"/>
    </location>
</feature>
<feature type="zinc finger region" description="FYVE-type" evidence="3">
    <location>
        <begin position="66"/>
        <end position="121"/>
    </location>
</feature>
<feature type="region of interest" description="Disordered" evidence="6">
    <location>
        <begin position="25"/>
        <end position="50"/>
    </location>
</feature>
<feature type="region of interest" description="Disordered" evidence="6">
    <location>
        <begin position="128"/>
        <end position="466"/>
    </location>
</feature>
<feature type="region of interest" description="Disordered" evidence="6">
    <location>
        <begin position="582"/>
        <end position="605"/>
    </location>
</feature>
<feature type="region of interest" description="Disordered" evidence="6">
    <location>
        <begin position="1054"/>
        <end position="1163"/>
    </location>
</feature>
<feature type="region of interest" description="Disordered" evidence="6">
    <location>
        <begin position="1177"/>
        <end position="1311"/>
    </location>
</feature>
<feature type="region of interest" description="Disordered" evidence="6">
    <location>
        <begin position="1346"/>
        <end position="1373"/>
    </location>
</feature>
<feature type="compositionally biased region" description="Basic and acidic residues" evidence="6">
    <location>
        <begin position="25"/>
        <end position="35"/>
    </location>
</feature>
<feature type="compositionally biased region" description="Polar residues" evidence="6">
    <location>
        <begin position="172"/>
        <end position="182"/>
    </location>
</feature>
<feature type="compositionally biased region" description="Low complexity" evidence="6">
    <location>
        <begin position="190"/>
        <end position="284"/>
    </location>
</feature>
<feature type="compositionally biased region" description="Low complexity" evidence="6">
    <location>
        <begin position="300"/>
        <end position="316"/>
    </location>
</feature>
<feature type="compositionally biased region" description="Basic and acidic residues" evidence="6">
    <location>
        <begin position="326"/>
        <end position="345"/>
    </location>
</feature>
<feature type="compositionally biased region" description="Polar residues" evidence="6">
    <location>
        <begin position="356"/>
        <end position="367"/>
    </location>
</feature>
<feature type="compositionally biased region" description="Polar residues" evidence="6">
    <location>
        <begin position="379"/>
        <end position="389"/>
    </location>
</feature>
<feature type="compositionally biased region" description="Low complexity" evidence="6">
    <location>
        <begin position="395"/>
        <end position="415"/>
    </location>
</feature>
<feature type="compositionally biased region" description="Polar residues" evidence="6">
    <location>
        <begin position="1086"/>
        <end position="1097"/>
    </location>
</feature>
<feature type="compositionally biased region" description="Basic residues" evidence="6">
    <location>
        <begin position="1112"/>
        <end position="1121"/>
    </location>
</feature>
<feature type="compositionally biased region" description="Basic and acidic residues" evidence="6">
    <location>
        <begin position="1129"/>
        <end position="1154"/>
    </location>
</feature>
<feature type="compositionally biased region" description="Low complexity" evidence="6">
    <location>
        <begin position="1181"/>
        <end position="1230"/>
    </location>
</feature>
<feature type="compositionally biased region" description="Polar residues" evidence="6">
    <location>
        <begin position="1242"/>
        <end position="1255"/>
    </location>
</feature>
<feature type="compositionally biased region" description="Low complexity" evidence="6">
    <location>
        <begin position="1256"/>
        <end position="1277"/>
    </location>
</feature>
<feature type="compositionally biased region" description="Polar residues" evidence="6">
    <location>
        <begin position="1278"/>
        <end position="1288"/>
    </location>
</feature>
<feature type="compositionally biased region" description="Low complexity" evidence="6">
    <location>
        <begin position="1297"/>
        <end position="1311"/>
    </location>
</feature>
<feature type="binding site" evidence="3">
    <location>
        <position position="72"/>
    </location>
    <ligand>
        <name>Zn(2+)</name>
        <dbReference type="ChEBI" id="CHEBI:29105"/>
        <label>1</label>
    </ligand>
</feature>
<feature type="binding site" evidence="3">
    <location>
        <position position="75"/>
    </location>
    <ligand>
        <name>Zn(2+)</name>
        <dbReference type="ChEBI" id="CHEBI:29105"/>
        <label>1</label>
    </ligand>
</feature>
<feature type="binding site" evidence="3">
    <location>
        <position position="88"/>
    </location>
    <ligand>
        <name>Zn(2+)</name>
        <dbReference type="ChEBI" id="CHEBI:29105"/>
        <label>2</label>
    </ligand>
</feature>
<feature type="binding site" evidence="3">
    <location>
        <position position="91"/>
    </location>
    <ligand>
        <name>Zn(2+)</name>
        <dbReference type="ChEBI" id="CHEBI:29105"/>
        <label>2</label>
    </ligand>
</feature>
<feature type="binding site" evidence="3">
    <location>
        <position position="96"/>
    </location>
    <ligand>
        <name>Zn(2+)</name>
        <dbReference type="ChEBI" id="CHEBI:29105"/>
        <label>1</label>
    </ligand>
</feature>
<feature type="binding site" evidence="3">
    <location>
        <position position="99"/>
    </location>
    <ligand>
        <name>Zn(2+)</name>
        <dbReference type="ChEBI" id="CHEBI:29105"/>
        <label>1</label>
    </ligand>
</feature>
<feature type="binding site" evidence="3">
    <location>
        <position position="113"/>
    </location>
    <ligand>
        <name>Zn(2+)</name>
        <dbReference type="ChEBI" id="CHEBI:29105"/>
        <label>2</label>
    </ligand>
</feature>
<feature type="binding site" evidence="3">
    <location>
        <position position="116"/>
    </location>
    <ligand>
        <name>Zn(2+)</name>
        <dbReference type="ChEBI" id="CHEBI:29105"/>
        <label>2</label>
    </ligand>
</feature>
<feature type="splice variant" id="VSP_009139" description="In isoform b." evidence="9">
    <location>
        <begin position="976"/>
        <end position="991"/>
    </location>
</feature>
<feature type="splice variant" id="VSP_009140" description="In isoform b." evidence="9">
    <original>WL</original>
    <variation>AR</variation>
    <location>
        <begin position="1386"/>
        <end position="1387"/>
    </location>
</feature>
<feature type="splice variant" id="VSP_009141" description="In isoform b." evidence="9">
    <location>
        <begin position="1388"/>
        <end position="1563"/>
    </location>
</feature>
<comment type="function">
    <text evidence="7 8">Regulates the efficiency of a post-docking step of the release pathway. Acts after vesicle docking likely via regulating priming. May regulate the conformational changes in syntaxin. Binding of vesicles via rab-3[GTP] to Rim may signal the presence of a docked synaptic vesicle. Rim may then signal to unc-13 to change the conformation of syntaxin from the closed to the open state. Syntaxin could then engage synaptobrevin on the docked vesicle to form SNARE complexes and to prime the vesicle for release. Not required for the development or the structural organization of synapses. May play a role in regulating entry into the dauer state (PubMed:30460068).</text>
</comment>
<comment type="subcellular location">
    <subcellularLocation>
        <location evidence="1">Synapse</location>
    </subcellularLocation>
</comment>
<comment type="alternative products">
    <event type="alternative splicing"/>
    <isoform>
        <id>Q22366-1</id>
        <name evidence="10">a</name>
        <sequence type="displayed"/>
    </isoform>
    <isoform>
        <id>Q22366-2</id>
        <name evidence="11">b</name>
        <sequence type="described" ref="VSP_009139 VSP_009140 VSP_009141"/>
    </isoform>
</comment>
<comment type="tissue specificity">
    <text evidence="7">Restricted to discrete puncta in synapse-rich regions of the nervous system including the nerve ring, the ventral nerve cord and the dorsal nerve cord. Localized expression was found in the head.</text>
</comment>
<comment type="developmental stage">
    <text evidence="7">Observed in all larval stages.</text>
</comment>
<evidence type="ECO:0000250" key="1"/>
<evidence type="ECO:0000255" key="2">
    <source>
        <dbReference type="PROSITE-ProRule" id="PRU00041"/>
    </source>
</evidence>
<evidence type="ECO:0000255" key="3">
    <source>
        <dbReference type="PROSITE-ProRule" id="PRU00091"/>
    </source>
</evidence>
<evidence type="ECO:0000255" key="4">
    <source>
        <dbReference type="PROSITE-ProRule" id="PRU00143"/>
    </source>
</evidence>
<evidence type="ECO:0000255" key="5">
    <source>
        <dbReference type="PROSITE-ProRule" id="PRU00234"/>
    </source>
</evidence>
<evidence type="ECO:0000256" key="6">
    <source>
        <dbReference type="SAM" id="MobiDB-lite"/>
    </source>
</evidence>
<evidence type="ECO:0000269" key="7">
    <source>
    </source>
</evidence>
<evidence type="ECO:0000269" key="8">
    <source>
    </source>
</evidence>
<evidence type="ECO:0000305" key="9"/>
<evidence type="ECO:0000312" key="10">
    <source>
        <dbReference type="WormBase" id="T10A3.1a"/>
    </source>
</evidence>
<evidence type="ECO:0000312" key="11">
    <source>
        <dbReference type="WormBase" id="T10A3.1b"/>
    </source>
</evidence>
<protein>
    <recommendedName>
        <fullName>Rab-3-interacting molecule unc-10</fullName>
        <shortName>Rim</shortName>
    </recommendedName>
    <alternativeName>
        <fullName>Uncoordinated protein 10</fullName>
    </alternativeName>
</protein>
<name>RIM_CAEEL</name>
<reference key="1">
    <citation type="journal article" date="2001" name="Nat. Neurosci.">
        <title>A post-docking role for active zone protein Rim.</title>
        <authorList>
            <person name="Koushika S.P."/>
            <person name="Richmond J.E."/>
            <person name="Hadwiger G."/>
            <person name="Weimer R.M."/>
            <person name="Jorgensen E.M."/>
            <person name="Nonet M.L."/>
        </authorList>
    </citation>
    <scope>NUCLEOTIDE SEQUENCE [MRNA] (ISOFORM A)</scope>
    <scope>FUNCTION</scope>
    <scope>TISSUE SPECIFICITY</scope>
    <scope>DEVELOPMENTAL STAGE</scope>
</reference>
<reference key="2">
    <citation type="journal article" date="1998" name="Science">
        <title>Genome sequence of the nematode C. elegans: a platform for investigating biology.</title>
        <authorList>
            <consortium name="The C. elegans sequencing consortium"/>
        </authorList>
    </citation>
    <scope>NUCLEOTIDE SEQUENCE [LARGE SCALE GENOMIC DNA]</scope>
    <source>
        <strain>Bristol N2</strain>
    </source>
</reference>
<reference key="3">
    <citation type="journal article" date="2017" name="Anim. Cells Syst. (Seoul)">
        <title>CFL-1, a novel F-box protein with leucine-rich repeat may interact with UNC-10 for the regulation of defecation and daumone response in Caenorhabditis elegans.</title>
        <authorList>
            <person name="Kim S.M."/>
            <person name="Hwang S.Y."/>
        </authorList>
    </citation>
    <scope>FUNCTION</scope>
</reference>
<keyword id="KW-0025">Alternative splicing</keyword>
<keyword id="KW-0268">Exocytosis</keyword>
<keyword id="KW-0479">Metal-binding</keyword>
<keyword id="KW-1185">Reference proteome</keyword>
<keyword id="KW-0677">Repeat</keyword>
<keyword id="KW-0770">Synapse</keyword>
<keyword id="KW-0862">Zinc</keyword>
<keyword id="KW-0863">Zinc-finger</keyword>
<dbReference type="EMBL" id="AF257062">
    <property type="protein sequence ID" value="AAK49331.1"/>
    <property type="molecule type" value="mRNA"/>
</dbReference>
<dbReference type="EMBL" id="BX284606">
    <property type="protein sequence ID" value="CCD71364.1"/>
    <property type="molecule type" value="Genomic_DNA"/>
</dbReference>
<dbReference type="EMBL" id="BX284606">
    <property type="protein sequence ID" value="CCD71365.1"/>
    <property type="molecule type" value="Genomic_DNA"/>
</dbReference>
<dbReference type="PIR" id="T29736">
    <property type="entry name" value="T29736"/>
</dbReference>
<dbReference type="RefSeq" id="NP_001024901.1">
    <molecule id="Q22366-2"/>
    <property type="nucleotide sequence ID" value="NM_001029730.6"/>
</dbReference>
<dbReference type="RefSeq" id="NP_741831.1">
    <molecule id="Q22366-1"/>
    <property type="nucleotide sequence ID" value="NM_171720.7"/>
</dbReference>
<dbReference type="SMR" id="Q22366"/>
<dbReference type="BioGRID" id="45915">
    <property type="interactions" value="9"/>
</dbReference>
<dbReference type="FunCoup" id="Q22366">
    <property type="interactions" value="531"/>
</dbReference>
<dbReference type="IntAct" id="Q22366">
    <property type="interactions" value="7"/>
</dbReference>
<dbReference type="MINT" id="Q22366"/>
<dbReference type="STRING" id="6239.T10A3.1a.1"/>
<dbReference type="iPTMnet" id="Q22366"/>
<dbReference type="PaxDb" id="6239-T10A3.1a"/>
<dbReference type="PeptideAtlas" id="Q22366"/>
<dbReference type="EnsemblMetazoa" id="T10A3.1a.1">
    <molecule id="Q22366-1"/>
    <property type="protein sequence ID" value="T10A3.1a.1"/>
    <property type="gene ID" value="WBGene00006750"/>
</dbReference>
<dbReference type="EnsemblMetazoa" id="T10A3.1b.1">
    <molecule id="Q22366-2"/>
    <property type="protein sequence ID" value="T10A3.1b.1"/>
    <property type="gene ID" value="WBGene00006750"/>
</dbReference>
<dbReference type="GeneID" id="180990"/>
<dbReference type="KEGG" id="cel:CELE_T10A3.1"/>
<dbReference type="UCSC" id="T10A3.1b">
    <molecule id="Q22366-1"/>
    <property type="organism name" value="c. elegans"/>
</dbReference>
<dbReference type="AGR" id="WB:WBGene00006750"/>
<dbReference type="CTD" id="180990"/>
<dbReference type="WormBase" id="T10A3.1a">
    <molecule id="Q22366-1"/>
    <property type="protein sequence ID" value="CE30169"/>
    <property type="gene ID" value="WBGene00006750"/>
    <property type="gene designation" value="unc-10"/>
</dbReference>
<dbReference type="WormBase" id="T10A3.1b">
    <molecule id="Q22366-2"/>
    <property type="protein sequence ID" value="CE31234"/>
    <property type="gene ID" value="WBGene00006750"/>
    <property type="gene designation" value="unc-10"/>
</dbReference>
<dbReference type="eggNOG" id="KOG2060">
    <property type="taxonomic scope" value="Eukaryota"/>
</dbReference>
<dbReference type="eggNOG" id="KOG3528">
    <property type="taxonomic scope" value="Eukaryota"/>
</dbReference>
<dbReference type="eggNOG" id="KOG3799">
    <property type="taxonomic scope" value="Eukaryota"/>
</dbReference>
<dbReference type="GeneTree" id="ENSGT00940000168297"/>
<dbReference type="HOGENOM" id="CLU_001061_3_1_1"/>
<dbReference type="InParanoid" id="Q22366"/>
<dbReference type="OMA" id="FPLHHEC"/>
<dbReference type="OrthoDB" id="420032at2759"/>
<dbReference type="PhylomeDB" id="Q22366"/>
<dbReference type="Reactome" id="R-CEL-181429">
    <property type="pathway name" value="Serotonin Neurotransmitter Release Cycle"/>
</dbReference>
<dbReference type="Reactome" id="R-CEL-181430">
    <property type="pathway name" value="Norepinephrine Neurotransmitter Release Cycle"/>
</dbReference>
<dbReference type="Reactome" id="R-CEL-210500">
    <property type="pathway name" value="Glutamate Neurotransmitter Release Cycle"/>
</dbReference>
<dbReference type="Reactome" id="R-CEL-212676">
    <property type="pathway name" value="Dopamine Neurotransmitter Release Cycle"/>
</dbReference>
<dbReference type="Reactome" id="R-CEL-264642">
    <property type="pathway name" value="Acetylcholine Neurotransmitter Release Cycle"/>
</dbReference>
<dbReference type="Reactome" id="R-CEL-888590">
    <property type="pathway name" value="GABA synthesis, release, reuptake and degradation"/>
</dbReference>
<dbReference type="PRO" id="PR:Q22366"/>
<dbReference type="Proteomes" id="UP000001940">
    <property type="component" value="Chromosome X"/>
</dbReference>
<dbReference type="Bgee" id="WBGene00006750">
    <property type="expression patterns" value="Expressed in pharyngeal muscle cell (C elegans) and 3 other cell types or tissues"/>
</dbReference>
<dbReference type="ExpressionAtlas" id="Q22366">
    <property type="expression patterns" value="baseline and differential"/>
</dbReference>
<dbReference type="GO" id="GO:0030424">
    <property type="term" value="C:axon"/>
    <property type="evidence" value="ECO:0000314"/>
    <property type="project" value="WormBase"/>
</dbReference>
<dbReference type="GO" id="GO:0048786">
    <property type="term" value="C:presynaptic active zone"/>
    <property type="evidence" value="ECO:0000314"/>
    <property type="project" value="WormBase"/>
</dbReference>
<dbReference type="GO" id="GO:0098831">
    <property type="term" value="C:presynaptic active zone cytoplasmic component"/>
    <property type="evidence" value="ECO:0000318"/>
    <property type="project" value="GO_Central"/>
</dbReference>
<dbReference type="GO" id="GO:0042734">
    <property type="term" value="C:presynaptic membrane"/>
    <property type="evidence" value="ECO:0000318"/>
    <property type="project" value="GO_Central"/>
</dbReference>
<dbReference type="GO" id="GO:0045202">
    <property type="term" value="C:synapse"/>
    <property type="evidence" value="ECO:0000314"/>
    <property type="project" value="UniProtKB"/>
</dbReference>
<dbReference type="GO" id="GO:0031267">
    <property type="term" value="F:small GTPase binding"/>
    <property type="evidence" value="ECO:0000353"/>
    <property type="project" value="WormBase"/>
</dbReference>
<dbReference type="GO" id="GO:0098882">
    <property type="term" value="F:structural constituent of presynaptic active zone"/>
    <property type="evidence" value="ECO:0000318"/>
    <property type="project" value="GO_Central"/>
</dbReference>
<dbReference type="GO" id="GO:0008270">
    <property type="term" value="F:zinc ion binding"/>
    <property type="evidence" value="ECO:0007669"/>
    <property type="project" value="UniProtKB-KW"/>
</dbReference>
<dbReference type="GO" id="GO:0030421">
    <property type="term" value="P:defecation"/>
    <property type="evidence" value="ECO:0000315"/>
    <property type="project" value="WormBase"/>
</dbReference>
<dbReference type="GO" id="GO:0006886">
    <property type="term" value="P:intracellular protein transport"/>
    <property type="evidence" value="ECO:0007669"/>
    <property type="project" value="InterPro"/>
</dbReference>
<dbReference type="GO" id="GO:0040011">
    <property type="term" value="P:locomotion"/>
    <property type="evidence" value="ECO:0000315"/>
    <property type="project" value="WormBase"/>
</dbReference>
<dbReference type="GO" id="GO:0007626">
    <property type="term" value="P:locomotory behavior"/>
    <property type="evidence" value="ECO:0000315"/>
    <property type="project" value="WormBase"/>
</dbReference>
<dbReference type="GO" id="GO:0007617">
    <property type="term" value="P:mating behavior"/>
    <property type="evidence" value="ECO:0000315"/>
    <property type="project" value="WormBase"/>
</dbReference>
<dbReference type="GO" id="GO:0040018">
    <property type="term" value="P:positive regulation of multicellular organism growth"/>
    <property type="evidence" value="ECO:0000315"/>
    <property type="project" value="WormBase"/>
</dbReference>
<dbReference type="GO" id="GO:0050806">
    <property type="term" value="P:positive regulation of synaptic transmission"/>
    <property type="evidence" value="ECO:0000314"/>
    <property type="project" value="WormBase"/>
</dbReference>
<dbReference type="GO" id="GO:0032224">
    <property type="term" value="P:positive regulation of synaptic transmission, cholinergic"/>
    <property type="evidence" value="ECO:0000315"/>
    <property type="project" value="WormBase"/>
</dbReference>
<dbReference type="GO" id="GO:0008104">
    <property type="term" value="P:protein localization"/>
    <property type="evidence" value="ECO:0000315"/>
    <property type="project" value="WormBase"/>
</dbReference>
<dbReference type="GO" id="GO:1905909">
    <property type="term" value="P:regulation of dauer entry"/>
    <property type="evidence" value="ECO:0000315"/>
    <property type="project" value="UniProtKB"/>
</dbReference>
<dbReference type="GO" id="GO:0043051">
    <property type="term" value="P:regulation of nematode pharyngeal pumping"/>
    <property type="evidence" value="ECO:0000315"/>
    <property type="project" value="WormBase"/>
</dbReference>
<dbReference type="GO" id="GO:2000300">
    <property type="term" value="P:regulation of synaptic vesicle exocytosis"/>
    <property type="evidence" value="ECO:0000318"/>
    <property type="project" value="GO_Central"/>
</dbReference>
<dbReference type="GO" id="GO:0007271">
    <property type="term" value="P:synaptic transmission, cholinergic"/>
    <property type="evidence" value="ECO:0000315"/>
    <property type="project" value="WormBase"/>
</dbReference>
<dbReference type="GO" id="GO:0016081">
    <property type="term" value="P:synaptic vesicle docking"/>
    <property type="evidence" value="ECO:0000318"/>
    <property type="project" value="GO_Central"/>
</dbReference>
<dbReference type="GO" id="GO:0016082">
    <property type="term" value="P:synaptic vesicle priming"/>
    <property type="evidence" value="ECO:0000314"/>
    <property type="project" value="WormBase"/>
</dbReference>
<dbReference type="CDD" id="cd04031">
    <property type="entry name" value="C2A_RIM1alpha"/>
    <property type="match status" value="1"/>
</dbReference>
<dbReference type="CDD" id="cd04028">
    <property type="entry name" value="C2B_RIM1alpha"/>
    <property type="match status" value="1"/>
</dbReference>
<dbReference type="CDD" id="cd06714">
    <property type="entry name" value="PDZ_RIM-like"/>
    <property type="match status" value="1"/>
</dbReference>
<dbReference type="FunFam" id="2.60.40.150:FF:000324">
    <property type="entry name" value="Rab-3-interacting molecule unc-10"/>
    <property type="match status" value="1"/>
</dbReference>
<dbReference type="FunFam" id="3.30.40.10:FF:000780">
    <property type="entry name" value="Rab-3-interacting molecule unc-10"/>
    <property type="match status" value="1"/>
</dbReference>
<dbReference type="FunFam" id="2.30.42.10:FF:000228">
    <property type="entry name" value="Rab3 interacting molecule, isoform R"/>
    <property type="match status" value="1"/>
</dbReference>
<dbReference type="FunFam" id="2.60.40.150:FF:000001">
    <property type="entry name" value="Regulating synaptic membrane exocytosis 3, isoform CRA_a"/>
    <property type="match status" value="1"/>
</dbReference>
<dbReference type="Gene3D" id="2.30.42.10">
    <property type="match status" value="1"/>
</dbReference>
<dbReference type="Gene3D" id="2.60.40.150">
    <property type="entry name" value="C2 domain"/>
    <property type="match status" value="2"/>
</dbReference>
<dbReference type="Gene3D" id="3.30.40.10">
    <property type="entry name" value="Zinc/RING finger domain, C3HC4 (zinc finger)"/>
    <property type="match status" value="1"/>
</dbReference>
<dbReference type="InterPro" id="IPR000008">
    <property type="entry name" value="C2_dom"/>
</dbReference>
<dbReference type="InterPro" id="IPR035892">
    <property type="entry name" value="C2_domain_sf"/>
</dbReference>
<dbReference type="InterPro" id="IPR001478">
    <property type="entry name" value="PDZ"/>
</dbReference>
<dbReference type="InterPro" id="IPR036034">
    <property type="entry name" value="PDZ_sf"/>
</dbReference>
<dbReference type="InterPro" id="IPR010911">
    <property type="entry name" value="Rab_BD"/>
</dbReference>
<dbReference type="InterPro" id="IPR039032">
    <property type="entry name" value="Rim-like"/>
</dbReference>
<dbReference type="InterPro" id="IPR054386">
    <property type="entry name" value="RIM_Znf"/>
</dbReference>
<dbReference type="InterPro" id="IPR017455">
    <property type="entry name" value="Znf_FYVE-rel"/>
</dbReference>
<dbReference type="InterPro" id="IPR011011">
    <property type="entry name" value="Znf_FYVE_PHD"/>
</dbReference>
<dbReference type="InterPro" id="IPR013083">
    <property type="entry name" value="Znf_RING/FYVE/PHD"/>
</dbReference>
<dbReference type="PANTHER" id="PTHR12157:SF21">
    <property type="entry name" value="RAB3 INTERACTING MOLECULE, ISOFORM F"/>
    <property type="match status" value="1"/>
</dbReference>
<dbReference type="PANTHER" id="PTHR12157">
    <property type="entry name" value="REGULATING SYNAPTIC MEMBRANE EXOCYTOSIS PROTEIN"/>
    <property type="match status" value="1"/>
</dbReference>
<dbReference type="Pfam" id="PF00168">
    <property type="entry name" value="C2"/>
    <property type="match status" value="2"/>
</dbReference>
<dbReference type="Pfam" id="PF00595">
    <property type="entry name" value="PDZ"/>
    <property type="match status" value="1"/>
</dbReference>
<dbReference type="Pfam" id="PF22601">
    <property type="entry name" value="RIM2a_ZnF"/>
    <property type="match status" value="1"/>
</dbReference>
<dbReference type="SMART" id="SM00239">
    <property type="entry name" value="C2"/>
    <property type="match status" value="2"/>
</dbReference>
<dbReference type="SMART" id="SM00228">
    <property type="entry name" value="PDZ"/>
    <property type="match status" value="1"/>
</dbReference>
<dbReference type="SUPFAM" id="SSF49562">
    <property type="entry name" value="C2 domain (Calcium/lipid-binding domain, CaLB)"/>
    <property type="match status" value="2"/>
</dbReference>
<dbReference type="SUPFAM" id="SSF57903">
    <property type="entry name" value="FYVE/PHD zinc finger"/>
    <property type="match status" value="1"/>
</dbReference>
<dbReference type="SUPFAM" id="SSF50156">
    <property type="entry name" value="PDZ domain-like"/>
    <property type="match status" value="1"/>
</dbReference>
<dbReference type="PROSITE" id="PS50004">
    <property type="entry name" value="C2"/>
    <property type="match status" value="2"/>
</dbReference>
<dbReference type="PROSITE" id="PS50106">
    <property type="entry name" value="PDZ"/>
    <property type="match status" value="1"/>
</dbReference>
<dbReference type="PROSITE" id="PS50916">
    <property type="entry name" value="RABBD"/>
    <property type="match status" value="1"/>
</dbReference>
<dbReference type="PROSITE" id="PS50178">
    <property type="entry name" value="ZF_FYVE"/>
    <property type="match status" value="1"/>
</dbReference>
<proteinExistence type="evidence at transcript level"/>
<gene>
    <name evidence="10" type="primary">unc-10</name>
    <name evidence="10" type="ORF">T10A3.1</name>
</gene>
<sequence length="1563" mass="175479">MDDPSMMPDLSHLSAEEREIIENVFKRQKDEEAKETQISQKASEELSELDKQITERKETSKKLVGTQDDAICQICQKTKFADGIGHKCFYCQLRSCARCGGRAQSKNKAIWACSLCQKRQQILAKTGKWFQPEEQPQPKISGSEPSPSPQPLTDDNVPEPQQRRAEPPDKMNTPNYQNNQQPRGMGMQPNHNQTQQNFMNQNQNSNQHPNQNHNQNQMQNPHQNQNHVQNNHQGANNHQQNNRRAMQQQPMSQNQANQINQMNQNQNQQQSHNQNMTQNQRNQTGPQNQQRTNDSRTMKQTPQQQPSQYQNNVGAAHQHHNQHGQQEQHHQQMNEQRTDNNRMRENTNGQGGMFNRQPSLEQTTPMNKYNHVEDDGMNQRPTFYTGNSENDQRQFDGQMQQGSQQNNQNQNQNNRNLRKNTVSRVTEEDYASSSNFESKKQRNNSSQSQSNTQGVRACPSTDDHLNRVKNRLHRQLRSMSSSEEDIIAGGGGNTLKMSTSAVVASGGKTAFHDDMGASNVQRLSEECNSEKDLLRYIYGDHKNSDSSSLGAGVGGSGGGGVLSGNSVLKSKSHALLKGSYQGGLDMQANRRRDKSLSLSPSRNDHFGTGSISGGDLLASRIRTFLSHPVTWQPSADQKKLIGHMILHRTENSAANGDLGLKIVGGRRTDTGKLGAFITQVKPGSVADTIGRLRPGDEVVEWNGQSLQNATYEQVYDSIAASRYDTSVELIVSRSAIIPGGDDFLNLTPSQMSSSAYSRVPSAYPSQFQRQLPNPDLFLDIHPALQQLSLPHSQSAVFPHNNTLTSRNRSTSSYYYSDVPDLGVPSNREMQESQAFGTGHIFGRIEVSFVYSHHDRQLSVALVRGFDLPPRSDGTPRNPYVKIFLLPDRSEKSRRQSAVIAETLMPVWDEVFYYNGLTEPMLLQRVLELTVWDYDKFGTNSFLGETLIDLASVPLDGEHSLMCILVDMDDDNPLRTVISIFKFHVIILTFLQRLKLRKASYNAPTRRPQSELNYYDHSSNYYDHISQNIDKQPHHHHLAPNDEENDEYIDDDELENDIDLATGGGARKSRTYRREKGMHGGHGYADWTQNHQRQSGYTSDHGYGRQNMIGRAYNRRQQRRPRSATALSQMEREDMYDPTRKHRDDNEYSMRESVRHGSQYYLGDQPLYEDGRYKISQGQMTPKQHNQQHQPHPLSQAHQQQQTAGVQPQHHQGFQQQQHPQQPNQQMQQMQPPMPNQGYYSDGSETLSVHSTNSMPTTMTTVNRRNMNANNTSNDNTSFAETPTANTNRVPIKETKQNSLASSSSVAGGGSAANNVMKERKKSLMTRFIPGRGAEGKRTGFARSEEVGIPGNLSSDRLTEPTPPFLKQASKESTDSAHSDKFARQCWLPVLADGPLGTFVDNLGPGQVVGRQVLASPVLGEIQIALMAGRSGIDVEIIKAKNLVVKPGVKVCPAPYVKVYLMEGKQCIAKAKTNAATKTTSPLFQQHLIFNDSPKKKTLQVTVLGDYGRMERKVFMGISQIRLEDLELGSQPLIGWYKLFHSSSLAGTGPVRKDSDVSVGGAQQ</sequence>
<accession>Q22366</accession>
<accession>Q22367</accession>
<accession>Q8MPX5</accession>
<accession>Q95WX9</accession>